<feature type="chain" id="PRO_0000156102" description="Ribose 1,5-bisphosphate isomerase">
    <location>
        <begin position="1"/>
        <end position="313"/>
    </location>
</feature>
<feature type="active site" description="Proton acceptor" evidence="1">
    <location>
        <position position="121"/>
    </location>
</feature>
<feature type="active site" description="Proton donor" evidence="1">
    <location>
        <position position="190"/>
    </location>
</feature>
<feature type="binding site" evidence="1">
    <location>
        <begin position="17"/>
        <end position="20"/>
    </location>
    <ligand>
        <name>substrate</name>
    </ligand>
</feature>
<feature type="binding site" evidence="1">
    <location>
        <position position="57"/>
    </location>
    <ligand>
        <name>substrate</name>
    </ligand>
</feature>
<feature type="binding site" evidence="1">
    <location>
        <begin position="200"/>
        <end position="201"/>
    </location>
    <ligand>
        <name>substrate</name>
    </ligand>
</feature>
<feature type="binding site" evidence="1">
    <location>
        <position position="226"/>
    </location>
    <ligand>
        <name>substrate</name>
    </ligand>
</feature>
<name>R15PI_ARCFU</name>
<reference key="1">
    <citation type="journal article" date="1997" name="Nature">
        <title>The complete genome sequence of the hyperthermophilic, sulphate-reducing archaeon Archaeoglobus fulgidus.</title>
        <authorList>
            <person name="Klenk H.-P."/>
            <person name="Clayton R.A."/>
            <person name="Tomb J.-F."/>
            <person name="White O."/>
            <person name="Nelson K.E."/>
            <person name="Ketchum K.A."/>
            <person name="Dodson R.J."/>
            <person name="Gwinn M.L."/>
            <person name="Hickey E.K."/>
            <person name="Peterson J.D."/>
            <person name="Richardson D.L."/>
            <person name="Kerlavage A.R."/>
            <person name="Graham D.E."/>
            <person name="Kyrpides N.C."/>
            <person name="Fleischmann R.D."/>
            <person name="Quackenbush J."/>
            <person name="Lee N.H."/>
            <person name="Sutton G.G."/>
            <person name="Gill S.R."/>
            <person name="Kirkness E.F."/>
            <person name="Dougherty B.A."/>
            <person name="McKenney K."/>
            <person name="Adams M.D."/>
            <person name="Loftus B.J."/>
            <person name="Peterson S.N."/>
            <person name="Reich C.I."/>
            <person name="McNeil L.K."/>
            <person name="Badger J.H."/>
            <person name="Glodek A."/>
            <person name="Zhou L."/>
            <person name="Overbeek R."/>
            <person name="Gocayne J.D."/>
            <person name="Weidman J.F."/>
            <person name="McDonald L.A."/>
            <person name="Utterback T.R."/>
            <person name="Cotton M.D."/>
            <person name="Spriggs T."/>
            <person name="Artiach P."/>
            <person name="Kaine B.P."/>
            <person name="Sykes S.M."/>
            <person name="Sadow P.W."/>
            <person name="D'Andrea K.P."/>
            <person name="Bowman C."/>
            <person name="Fujii C."/>
            <person name="Garland S.A."/>
            <person name="Mason T.M."/>
            <person name="Olsen G.J."/>
            <person name="Fraser C.M."/>
            <person name="Smith H.O."/>
            <person name="Woese C.R."/>
            <person name="Venter J.C."/>
        </authorList>
    </citation>
    <scope>NUCLEOTIDE SEQUENCE [LARGE SCALE GENOMIC DNA]</scope>
    <source>
        <strain>ATCC 49558 / DSM 4304 / JCM 9628 / NBRC 100126 / VC-16</strain>
    </source>
</reference>
<proteinExistence type="inferred from homology"/>
<evidence type="ECO:0000255" key="1">
    <source>
        <dbReference type="HAMAP-Rule" id="MF_02230"/>
    </source>
</evidence>
<evidence type="ECO:0000305" key="2"/>
<keyword id="KW-0119">Carbohydrate metabolism</keyword>
<keyword id="KW-0413">Isomerase</keyword>
<keyword id="KW-1185">Reference proteome</keyword>
<dbReference type="EC" id="5.3.1.29" evidence="1"/>
<dbReference type="EMBL" id="AE000782">
    <property type="protein sequence ID" value="AAB89217.1"/>
    <property type="molecule type" value="Genomic_DNA"/>
</dbReference>
<dbReference type="PIR" id="D69504">
    <property type="entry name" value="D69504"/>
</dbReference>
<dbReference type="RefSeq" id="WP_010879529.1">
    <property type="nucleotide sequence ID" value="NC_000917.1"/>
</dbReference>
<dbReference type="SMR" id="O28242"/>
<dbReference type="STRING" id="224325.AF_2037"/>
<dbReference type="PaxDb" id="224325-AF_2037"/>
<dbReference type="DNASU" id="1485263"/>
<dbReference type="EnsemblBacteria" id="AAB89217">
    <property type="protein sequence ID" value="AAB89217"/>
    <property type="gene ID" value="AF_2037"/>
</dbReference>
<dbReference type="GeneID" id="1485263"/>
<dbReference type="KEGG" id="afu:AF_2037"/>
<dbReference type="eggNOG" id="arCOG01124">
    <property type="taxonomic scope" value="Archaea"/>
</dbReference>
<dbReference type="HOGENOM" id="CLU_016218_2_1_2"/>
<dbReference type="OrthoDB" id="27639at2157"/>
<dbReference type="PhylomeDB" id="O28242"/>
<dbReference type="Proteomes" id="UP000002199">
    <property type="component" value="Chromosome"/>
</dbReference>
<dbReference type="GO" id="GO:0043917">
    <property type="term" value="F:ribose 1,5-bisphosphate isomerase activity"/>
    <property type="evidence" value="ECO:0007669"/>
    <property type="project" value="UniProtKB-UniRule"/>
</dbReference>
<dbReference type="GO" id="GO:0046523">
    <property type="term" value="F:S-methyl-5-thioribose-1-phosphate isomerase activity"/>
    <property type="evidence" value="ECO:0007669"/>
    <property type="project" value="TreeGrafter"/>
</dbReference>
<dbReference type="GO" id="GO:0019509">
    <property type="term" value="P:L-methionine salvage from methylthioadenosine"/>
    <property type="evidence" value="ECO:0007669"/>
    <property type="project" value="TreeGrafter"/>
</dbReference>
<dbReference type="GO" id="GO:0019323">
    <property type="term" value="P:pentose catabolic process"/>
    <property type="evidence" value="ECO:0007669"/>
    <property type="project" value="UniProtKB-UniRule"/>
</dbReference>
<dbReference type="FunFam" id="3.40.50.10470:FF:000019">
    <property type="entry name" value="Ribose 1,5-bisphosphate isomerase"/>
    <property type="match status" value="1"/>
</dbReference>
<dbReference type="Gene3D" id="1.20.120.420">
    <property type="entry name" value="translation initiation factor eif-2b, domain 1"/>
    <property type="match status" value="1"/>
</dbReference>
<dbReference type="Gene3D" id="3.40.50.10470">
    <property type="entry name" value="Translation initiation factor eif-2b, domain 2"/>
    <property type="match status" value="1"/>
</dbReference>
<dbReference type="HAMAP" id="MF_02230">
    <property type="entry name" value="R15P_isomerase"/>
    <property type="match status" value="1"/>
</dbReference>
<dbReference type="InterPro" id="IPR000649">
    <property type="entry name" value="IF-2B-related"/>
</dbReference>
<dbReference type="InterPro" id="IPR042529">
    <property type="entry name" value="IF_2B-like_C"/>
</dbReference>
<dbReference type="InterPro" id="IPR011559">
    <property type="entry name" value="Initiation_fac_2B_a/b/d"/>
</dbReference>
<dbReference type="InterPro" id="IPR027363">
    <property type="entry name" value="M1Pi_N"/>
</dbReference>
<dbReference type="InterPro" id="IPR037171">
    <property type="entry name" value="NagB/RpiA_transferase-like"/>
</dbReference>
<dbReference type="InterPro" id="IPR005250">
    <property type="entry name" value="R15Pi"/>
</dbReference>
<dbReference type="NCBIfam" id="TIGR00524">
    <property type="entry name" value="eIF-2B_rel"/>
    <property type="match status" value="1"/>
</dbReference>
<dbReference type="NCBIfam" id="TIGR00511">
    <property type="entry name" value="ribulose_e2b2"/>
    <property type="match status" value="1"/>
</dbReference>
<dbReference type="PANTHER" id="PTHR43475">
    <property type="entry name" value="METHYLTHIORIBOSE-1-PHOSPHATE ISOMERASE"/>
    <property type="match status" value="1"/>
</dbReference>
<dbReference type="PANTHER" id="PTHR43475:SF2">
    <property type="entry name" value="RIBOSE 1,5-BISPHOSPHATE ISOMERASE"/>
    <property type="match status" value="1"/>
</dbReference>
<dbReference type="Pfam" id="PF01008">
    <property type="entry name" value="IF-2B"/>
    <property type="match status" value="1"/>
</dbReference>
<dbReference type="SUPFAM" id="SSF100950">
    <property type="entry name" value="NagB/RpiA/CoA transferase-like"/>
    <property type="match status" value="1"/>
</dbReference>
<sequence length="313" mass="35144">MEEVLEAAEKIRSMEVRGAARIARFAAETLMKFAEKASDEKFDEEMRFAAETLLNTRPTAVSLYNAINYVMRYSGESVEEKRQSVIRRAREFINWVETAQRKIGEIGEKRIKDGYTVMTHCNSSAALSVIKKAHENGKRVEVIATESRPRWQGHLTVKQLREAGIEVTLIVDSAVRYFINEVDCVVVGADTITANGALINKIGTSQIALAAKEARVPFMVAAETYKFSPKTLFGELVVIEERDAREVAPEEILKLGVKVRNPAFDVTPRDYIDVIITEIGAIPPEMAYIVITERLGYAGIEEEEITLNSRHFD</sequence>
<protein>
    <recommendedName>
        <fullName evidence="1">Ribose 1,5-bisphosphate isomerase</fullName>
        <shortName evidence="1">R15P isomerase</shortName>
        <shortName evidence="1">R15Pi</shortName>
        <ecNumber evidence="1">5.3.1.29</ecNumber>
    </recommendedName>
    <alternativeName>
        <fullName evidence="1">Ribulose 1,5-bisphosphate synthase</fullName>
        <shortName evidence="1">RuBP synthase</shortName>
    </alternativeName>
</protein>
<accession>O28242</accession>
<gene>
    <name type="ordered locus">AF_2037</name>
</gene>
<comment type="function">
    <text evidence="1">Catalyzes the isomerization of ribose 1,5-bisphosphate (R15P) to ribulose 1,5-bisphosphate (RuBP), the CO(2) acceptor and substrate for RubisCO. Functions in an archaeal AMP degradation pathway, together with AMP phosphorylase and RubisCO.</text>
</comment>
<comment type="catalytic activity">
    <reaction evidence="1">
        <text>alpha-D-ribose 1,5-bisphosphate = D-ribulose 1,5-bisphosphate</text>
        <dbReference type="Rhea" id="RHEA:32243"/>
        <dbReference type="ChEBI" id="CHEBI:57870"/>
        <dbReference type="ChEBI" id="CHEBI:68688"/>
        <dbReference type="EC" id="5.3.1.29"/>
    </reaction>
</comment>
<comment type="miscellaneous">
    <text evidence="1">Reaction proceeds via a cis-phosphoenolate intermediate.</text>
</comment>
<comment type="similarity">
    <text evidence="1 2">Belongs to the eIF-2B alpha/beta/delta subunits family. R15P isomerase subfamily.</text>
</comment>
<organism>
    <name type="scientific">Archaeoglobus fulgidus (strain ATCC 49558 / DSM 4304 / JCM 9628 / NBRC 100126 / VC-16)</name>
    <dbReference type="NCBI Taxonomy" id="224325"/>
    <lineage>
        <taxon>Archaea</taxon>
        <taxon>Methanobacteriati</taxon>
        <taxon>Methanobacteriota</taxon>
        <taxon>Archaeoglobi</taxon>
        <taxon>Archaeoglobales</taxon>
        <taxon>Archaeoglobaceae</taxon>
        <taxon>Archaeoglobus</taxon>
    </lineage>
</organism>